<organism>
    <name type="scientific">Anaeromyxobacter sp. (strain K)</name>
    <dbReference type="NCBI Taxonomy" id="447217"/>
    <lineage>
        <taxon>Bacteria</taxon>
        <taxon>Pseudomonadati</taxon>
        <taxon>Myxococcota</taxon>
        <taxon>Myxococcia</taxon>
        <taxon>Myxococcales</taxon>
        <taxon>Cystobacterineae</taxon>
        <taxon>Anaeromyxobacteraceae</taxon>
        <taxon>Anaeromyxobacter</taxon>
    </lineage>
</organism>
<reference key="1">
    <citation type="submission" date="2008-08" db="EMBL/GenBank/DDBJ databases">
        <title>Complete sequence of Anaeromyxobacter sp. K.</title>
        <authorList>
            <consortium name="US DOE Joint Genome Institute"/>
            <person name="Lucas S."/>
            <person name="Copeland A."/>
            <person name="Lapidus A."/>
            <person name="Glavina del Rio T."/>
            <person name="Dalin E."/>
            <person name="Tice H."/>
            <person name="Bruce D."/>
            <person name="Goodwin L."/>
            <person name="Pitluck S."/>
            <person name="Saunders E."/>
            <person name="Brettin T."/>
            <person name="Detter J.C."/>
            <person name="Han C."/>
            <person name="Larimer F."/>
            <person name="Land M."/>
            <person name="Hauser L."/>
            <person name="Kyrpides N."/>
            <person name="Ovchinnikiva G."/>
            <person name="Beliaev A."/>
        </authorList>
    </citation>
    <scope>NUCLEOTIDE SEQUENCE [LARGE SCALE GENOMIC DNA]</scope>
    <source>
        <strain>K</strain>
    </source>
</reference>
<accession>B4UJ61</accession>
<evidence type="ECO:0000255" key="1">
    <source>
        <dbReference type="HAMAP-Rule" id="MF_00139"/>
    </source>
</evidence>
<evidence type="ECO:0000255" key="2">
    <source>
        <dbReference type="PROSITE-ProRule" id="PRU01202"/>
    </source>
</evidence>
<gene>
    <name evidence="1" type="primary">purH</name>
    <name type="ordered locus">AnaeK_1391</name>
</gene>
<sequence>MTRRALVSVSDKTGLVPFARRLAALGVELLSTGGTQKTLAEAGVPVVGVGDYTQAPEILGGRVKTLHPRVHGGILYRRGLASDEADVKARDIPPIDLVVVNLYPFREAVAAGKPFETCVEEIDIGGPTMVRSAAKNSAHVGVVVDPADYEKVAAELEATRTLSAATRFYLMKKAFAHTAAYDAAISEYLTAREAPEAAPAHFPATLAAVYTKAYDLRYGENPHQAGAFYRAAREPEEPSVAFADVLQGKELSYNNLLDLQAALAGVMEFDETACVIIKHNTPCGVSTGRTAGEAFARARECDPVSAFGGIVALNRPVDEATASELTSLFLECVIAPGYDAAARAALAVKKNLRLLEAPRLGAARATWRRRPEEGRELRSIPGGLLVMDRDLGSVRRDDCKVMTKRAPTEQEWKDLLFAWKVVKHVKSNAIVFAKDDRTVAIGGGQTSRVESVKTAVMKAALDVRGSSVGSDAFFPFADGVEEIIKAGATAIIQPGGSMRDAEVIAAADKAGIAMVATGMRHFRH</sequence>
<dbReference type="EC" id="2.1.2.3" evidence="1"/>
<dbReference type="EC" id="3.5.4.10" evidence="1"/>
<dbReference type="EMBL" id="CP001131">
    <property type="protein sequence ID" value="ACG72622.1"/>
    <property type="molecule type" value="Genomic_DNA"/>
</dbReference>
<dbReference type="RefSeq" id="WP_012525443.1">
    <property type="nucleotide sequence ID" value="NC_011145.1"/>
</dbReference>
<dbReference type="SMR" id="B4UJ61"/>
<dbReference type="KEGG" id="ank:AnaeK_1391"/>
<dbReference type="HOGENOM" id="CLU_016316_5_2_7"/>
<dbReference type="OrthoDB" id="9802065at2"/>
<dbReference type="UniPathway" id="UPA00074">
    <property type="reaction ID" value="UER00133"/>
</dbReference>
<dbReference type="UniPathway" id="UPA00074">
    <property type="reaction ID" value="UER00135"/>
</dbReference>
<dbReference type="Proteomes" id="UP000001871">
    <property type="component" value="Chromosome"/>
</dbReference>
<dbReference type="GO" id="GO:0005829">
    <property type="term" value="C:cytosol"/>
    <property type="evidence" value="ECO:0007669"/>
    <property type="project" value="TreeGrafter"/>
</dbReference>
<dbReference type="GO" id="GO:0003937">
    <property type="term" value="F:IMP cyclohydrolase activity"/>
    <property type="evidence" value="ECO:0007669"/>
    <property type="project" value="UniProtKB-UniRule"/>
</dbReference>
<dbReference type="GO" id="GO:0004643">
    <property type="term" value="F:phosphoribosylaminoimidazolecarboxamide formyltransferase activity"/>
    <property type="evidence" value="ECO:0007669"/>
    <property type="project" value="UniProtKB-UniRule"/>
</dbReference>
<dbReference type="GO" id="GO:0006189">
    <property type="term" value="P:'de novo' IMP biosynthetic process"/>
    <property type="evidence" value="ECO:0007669"/>
    <property type="project" value="UniProtKB-UniRule"/>
</dbReference>
<dbReference type="CDD" id="cd01421">
    <property type="entry name" value="IMPCH"/>
    <property type="match status" value="1"/>
</dbReference>
<dbReference type="FunFam" id="3.40.140.20:FF:000001">
    <property type="entry name" value="Bifunctional purine biosynthesis protein PurH"/>
    <property type="match status" value="1"/>
</dbReference>
<dbReference type="FunFam" id="3.40.50.1380:FF:000001">
    <property type="entry name" value="Bifunctional purine biosynthesis protein PurH"/>
    <property type="match status" value="1"/>
</dbReference>
<dbReference type="Gene3D" id="3.40.140.20">
    <property type="match status" value="2"/>
</dbReference>
<dbReference type="Gene3D" id="3.40.50.1380">
    <property type="entry name" value="Methylglyoxal synthase-like domain"/>
    <property type="match status" value="1"/>
</dbReference>
<dbReference type="HAMAP" id="MF_00139">
    <property type="entry name" value="PurH"/>
    <property type="match status" value="1"/>
</dbReference>
<dbReference type="InterPro" id="IPR024051">
    <property type="entry name" value="AICAR_Tfase_dup_dom_sf"/>
</dbReference>
<dbReference type="InterPro" id="IPR016193">
    <property type="entry name" value="Cytidine_deaminase-like"/>
</dbReference>
<dbReference type="InterPro" id="IPR011607">
    <property type="entry name" value="MGS-like_dom"/>
</dbReference>
<dbReference type="InterPro" id="IPR036914">
    <property type="entry name" value="MGS-like_dom_sf"/>
</dbReference>
<dbReference type="InterPro" id="IPR002695">
    <property type="entry name" value="PurH-like"/>
</dbReference>
<dbReference type="NCBIfam" id="NF002049">
    <property type="entry name" value="PRK00881.1"/>
    <property type="match status" value="1"/>
</dbReference>
<dbReference type="NCBIfam" id="TIGR00355">
    <property type="entry name" value="purH"/>
    <property type="match status" value="1"/>
</dbReference>
<dbReference type="PANTHER" id="PTHR11692:SF0">
    <property type="entry name" value="BIFUNCTIONAL PURINE BIOSYNTHESIS PROTEIN ATIC"/>
    <property type="match status" value="1"/>
</dbReference>
<dbReference type="PANTHER" id="PTHR11692">
    <property type="entry name" value="BIFUNCTIONAL PURINE BIOSYNTHESIS PROTEIN PURH"/>
    <property type="match status" value="1"/>
</dbReference>
<dbReference type="Pfam" id="PF01808">
    <property type="entry name" value="AICARFT_IMPCHas"/>
    <property type="match status" value="1"/>
</dbReference>
<dbReference type="Pfam" id="PF02142">
    <property type="entry name" value="MGS"/>
    <property type="match status" value="1"/>
</dbReference>
<dbReference type="PIRSF" id="PIRSF000414">
    <property type="entry name" value="AICARFT_IMPCHas"/>
    <property type="match status" value="1"/>
</dbReference>
<dbReference type="SMART" id="SM00798">
    <property type="entry name" value="AICARFT_IMPCHas"/>
    <property type="match status" value="1"/>
</dbReference>
<dbReference type="SMART" id="SM00851">
    <property type="entry name" value="MGS"/>
    <property type="match status" value="1"/>
</dbReference>
<dbReference type="SUPFAM" id="SSF53927">
    <property type="entry name" value="Cytidine deaminase-like"/>
    <property type="match status" value="1"/>
</dbReference>
<dbReference type="SUPFAM" id="SSF52335">
    <property type="entry name" value="Methylglyoxal synthase-like"/>
    <property type="match status" value="1"/>
</dbReference>
<dbReference type="PROSITE" id="PS51855">
    <property type="entry name" value="MGS"/>
    <property type="match status" value="1"/>
</dbReference>
<comment type="catalytic activity">
    <reaction evidence="1">
        <text>(6R)-10-formyltetrahydrofolate + 5-amino-1-(5-phospho-beta-D-ribosyl)imidazole-4-carboxamide = 5-formamido-1-(5-phospho-D-ribosyl)imidazole-4-carboxamide + (6S)-5,6,7,8-tetrahydrofolate</text>
        <dbReference type="Rhea" id="RHEA:22192"/>
        <dbReference type="ChEBI" id="CHEBI:57453"/>
        <dbReference type="ChEBI" id="CHEBI:58467"/>
        <dbReference type="ChEBI" id="CHEBI:58475"/>
        <dbReference type="ChEBI" id="CHEBI:195366"/>
        <dbReference type="EC" id="2.1.2.3"/>
    </reaction>
</comment>
<comment type="catalytic activity">
    <reaction evidence="1">
        <text>IMP + H2O = 5-formamido-1-(5-phospho-D-ribosyl)imidazole-4-carboxamide</text>
        <dbReference type="Rhea" id="RHEA:18445"/>
        <dbReference type="ChEBI" id="CHEBI:15377"/>
        <dbReference type="ChEBI" id="CHEBI:58053"/>
        <dbReference type="ChEBI" id="CHEBI:58467"/>
        <dbReference type="EC" id="3.5.4.10"/>
    </reaction>
</comment>
<comment type="pathway">
    <text evidence="1">Purine metabolism; IMP biosynthesis via de novo pathway; 5-formamido-1-(5-phospho-D-ribosyl)imidazole-4-carboxamide from 5-amino-1-(5-phospho-D-ribosyl)imidazole-4-carboxamide (10-formyl THF route): step 1/1.</text>
</comment>
<comment type="pathway">
    <text evidence="1">Purine metabolism; IMP biosynthesis via de novo pathway; IMP from 5-formamido-1-(5-phospho-D-ribosyl)imidazole-4-carboxamide: step 1/1.</text>
</comment>
<comment type="domain">
    <text evidence="1">The IMP cyclohydrolase activity resides in the N-terminal region.</text>
</comment>
<comment type="similarity">
    <text evidence="1">Belongs to the PurH family.</text>
</comment>
<keyword id="KW-0378">Hydrolase</keyword>
<keyword id="KW-0511">Multifunctional enzyme</keyword>
<keyword id="KW-0658">Purine biosynthesis</keyword>
<keyword id="KW-0808">Transferase</keyword>
<feature type="chain" id="PRO_1000096039" description="Bifunctional purine biosynthesis protein PurH">
    <location>
        <begin position="1"/>
        <end position="524"/>
    </location>
</feature>
<feature type="domain" description="MGS-like" evidence="2">
    <location>
        <begin position="1"/>
        <end position="144"/>
    </location>
</feature>
<name>PUR9_ANASK</name>
<proteinExistence type="inferred from homology"/>
<protein>
    <recommendedName>
        <fullName evidence="1">Bifunctional purine biosynthesis protein PurH</fullName>
    </recommendedName>
    <domain>
        <recommendedName>
            <fullName evidence="1">Phosphoribosylaminoimidazolecarboxamide formyltransferase</fullName>
            <ecNumber evidence="1">2.1.2.3</ecNumber>
        </recommendedName>
        <alternativeName>
            <fullName evidence="1">AICAR transformylase</fullName>
        </alternativeName>
    </domain>
    <domain>
        <recommendedName>
            <fullName evidence="1">IMP cyclohydrolase</fullName>
            <ecNumber evidence="1">3.5.4.10</ecNumber>
        </recommendedName>
        <alternativeName>
            <fullName evidence="1">ATIC</fullName>
        </alternativeName>
        <alternativeName>
            <fullName evidence="1">IMP synthase</fullName>
        </alternativeName>
        <alternativeName>
            <fullName evidence="1">Inosinicase</fullName>
        </alternativeName>
    </domain>
</protein>